<gene>
    <name type="ordered locus">TTHA0794</name>
</gene>
<protein>
    <recommendedName>
        <fullName>Type IV pilus assembly protein PilC</fullName>
    </recommendedName>
</protein>
<keyword id="KW-0002">3D-structure</keyword>
<keyword id="KW-0997">Cell inner membrane</keyword>
<keyword id="KW-1003">Cell membrane</keyword>
<keyword id="KW-0472">Membrane</keyword>
<keyword id="KW-1185">Reference proteome</keyword>
<keyword id="KW-0812">Transmembrane</keyword>
<keyword id="KW-1133">Transmembrane helix</keyword>
<keyword id="KW-0813">Transport</keyword>
<proteinExistence type="evidence at protein level"/>
<evidence type="ECO:0000250" key="1">
    <source>
        <dbReference type="UniProtKB" id="P22609"/>
    </source>
</evidence>
<evidence type="ECO:0000255" key="2"/>
<evidence type="ECO:0000269" key="3">
    <source>
    </source>
</evidence>
<evidence type="ECO:0007744" key="4">
    <source>
        <dbReference type="PDB" id="2WHN"/>
    </source>
</evidence>
<evidence type="ECO:0007829" key="5">
    <source>
        <dbReference type="PDB" id="2WHN"/>
    </source>
</evidence>
<reference key="1">
    <citation type="submission" date="2004-11" db="EMBL/GenBank/DDBJ databases">
        <title>Complete genome sequence of Thermus thermophilus HB8.</title>
        <authorList>
            <person name="Masui R."/>
            <person name="Kurokawa K."/>
            <person name="Nakagawa N."/>
            <person name="Tokunaga F."/>
            <person name="Koyama Y."/>
            <person name="Shibata T."/>
            <person name="Oshima T."/>
            <person name="Yokoyama S."/>
            <person name="Yasunaga T."/>
            <person name="Kuramitsu S."/>
        </authorList>
    </citation>
    <scope>NUCLEOTIDE SEQUENCE [LARGE SCALE GENOMIC DNA]</scope>
    <source>
        <strain>ATCC 27634 / DSM 579 / HB8</strain>
    </source>
</reference>
<reference evidence="4" key="2">
    <citation type="journal article" date="2010" name="Proteins">
        <title>Structure and oligomerization of the PilC type IV pilus biogenesis protein from Thermus thermophilus.</title>
        <authorList>
            <person name="Karuppiah V."/>
            <person name="Hassan D."/>
            <person name="Saleem M."/>
            <person name="Derrick J.P."/>
        </authorList>
    </citation>
    <scope>X-RAY CRYSTALLOGRAPHY (2.05 ANGSTROMS) OF 53-168</scope>
    <scope>SUBUNIT</scope>
</reference>
<comment type="function">
    <text evidence="1">Essential inner membrane component of the type IV pilus (T4P) that plays a role in surface and host cell adhesion, colonization, biofilm maturation, virulence, and twitching, a form of surface-associated motility facilitated by cycles of extension, adhesion, and retraction of T4P fibers. Controls both pilus assembly and disassembly and plays an important role in PilB localization to the complex and ATPase activity.</text>
</comment>
<comment type="subunit">
    <text evidence="1 3">Homotetramer (PubMed:20455262). Interacts with PilB (By similarity).</text>
</comment>
<comment type="subcellular location">
    <subcellularLocation>
        <location evidence="1">Cell inner membrane</location>
        <topology evidence="1">Multi-pass membrane protein</topology>
    </subcellularLocation>
</comment>
<comment type="similarity">
    <text>Belongs to the GSP F family.</text>
</comment>
<accession>Q5SK58</accession>
<dbReference type="EMBL" id="AP008226">
    <property type="protein sequence ID" value="BAD70617.1"/>
    <property type="molecule type" value="Genomic_DNA"/>
</dbReference>
<dbReference type="RefSeq" id="WP_011228203.1">
    <property type="nucleotide sequence ID" value="NC_006461.1"/>
</dbReference>
<dbReference type="RefSeq" id="YP_144060.1">
    <property type="nucleotide sequence ID" value="NC_006461.1"/>
</dbReference>
<dbReference type="PDB" id="2WHN">
    <property type="method" value="X-ray"/>
    <property type="resolution" value="2.05 A"/>
    <property type="chains" value="A/B=53-168"/>
</dbReference>
<dbReference type="PDBsum" id="2WHN"/>
<dbReference type="SMR" id="Q5SK58"/>
<dbReference type="EnsemblBacteria" id="BAD70617">
    <property type="protein sequence ID" value="BAD70617"/>
    <property type="gene ID" value="BAD70617"/>
</dbReference>
<dbReference type="GeneID" id="3168277"/>
<dbReference type="KEGG" id="ttj:TTHA0794"/>
<dbReference type="PATRIC" id="fig|300852.9.peg.787"/>
<dbReference type="eggNOG" id="COG1459">
    <property type="taxonomic scope" value="Bacteria"/>
</dbReference>
<dbReference type="HOGENOM" id="CLU_035032_2_1_0"/>
<dbReference type="PhylomeDB" id="Q5SK58"/>
<dbReference type="EvolutionaryTrace" id="Q5SK58"/>
<dbReference type="Proteomes" id="UP000000532">
    <property type="component" value="Chromosome"/>
</dbReference>
<dbReference type="GO" id="GO:0005886">
    <property type="term" value="C:plasma membrane"/>
    <property type="evidence" value="ECO:0007669"/>
    <property type="project" value="UniProtKB-SubCell"/>
</dbReference>
<dbReference type="GO" id="GO:0009306">
    <property type="term" value="P:protein secretion"/>
    <property type="evidence" value="ECO:0007669"/>
    <property type="project" value="InterPro"/>
</dbReference>
<dbReference type="FunFam" id="1.20.81.30:FF:000001">
    <property type="entry name" value="Type II secretion system protein F"/>
    <property type="match status" value="2"/>
</dbReference>
<dbReference type="Gene3D" id="1.20.81.30">
    <property type="entry name" value="Type II secretion system (T2SS), domain F"/>
    <property type="match status" value="2"/>
</dbReference>
<dbReference type="InterPro" id="IPR003004">
    <property type="entry name" value="GspF/PilC"/>
</dbReference>
<dbReference type="InterPro" id="IPR001992">
    <property type="entry name" value="T2SS_GspF/T4SS_PilC_CS"/>
</dbReference>
<dbReference type="InterPro" id="IPR018076">
    <property type="entry name" value="T2SS_GspF_dom"/>
</dbReference>
<dbReference type="InterPro" id="IPR042094">
    <property type="entry name" value="T2SS_GspF_sf"/>
</dbReference>
<dbReference type="PANTHER" id="PTHR30012">
    <property type="entry name" value="GENERAL SECRETION PATHWAY PROTEIN"/>
    <property type="match status" value="1"/>
</dbReference>
<dbReference type="PANTHER" id="PTHR30012:SF0">
    <property type="entry name" value="TYPE II SECRETION SYSTEM PROTEIN F-RELATED"/>
    <property type="match status" value="1"/>
</dbReference>
<dbReference type="Pfam" id="PF00482">
    <property type="entry name" value="T2SSF"/>
    <property type="match status" value="2"/>
</dbReference>
<dbReference type="PRINTS" id="PR00812">
    <property type="entry name" value="BCTERIALGSPF"/>
</dbReference>
<dbReference type="PROSITE" id="PS00874">
    <property type="entry name" value="T2SP_F"/>
    <property type="match status" value="1"/>
</dbReference>
<organism>
    <name type="scientific">Thermus thermophilus (strain ATCC 27634 / DSM 579 / HB8)</name>
    <dbReference type="NCBI Taxonomy" id="300852"/>
    <lineage>
        <taxon>Bacteria</taxon>
        <taxon>Thermotogati</taxon>
        <taxon>Deinococcota</taxon>
        <taxon>Deinococci</taxon>
        <taxon>Thermales</taxon>
        <taxon>Thermaceae</taxon>
        <taxon>Thermus</taxon>
    </lineage>
</organism>
<feature type="chain" id="PRO_0000450275" description="Type IV pilus assembly protein PilC">
    <location>
        <begin position="1"/>
        <end position="406"/>
    </location>
</feature>
<feature type="transmembrane region" description="Helical" evidence="2">
    <location>
        <begin position="69"/>
        <end position="91"/>
    </location>
</feature>
<feature type="transmembrane region" description="Helical" evidence="2">
    <location>
        <begin position="171"/>
        <end position="191"/>
    </location>
</feature>
<feature type="transmembrane region" description="Helical" evidence="2">
    <location>
        <begin position="211"/>
        <end position="231"/>
    </location>
</feature>
<feature type="transmembrane region" description="Helical" evidence="2">
    <location>
        <begin position="377"/>
        <end position="397"/>
    </location>
</feature>
<feature type="helix" evidence="5">
    <location>
        <begin position="55"/>
        <end position="58"/>
    </location>
</feature>
<feature type="helix" evidence="5">
    <location>
        <begin position="64"/>
        <end position="80"/>
    </location>
</feature>
<feature type="helix" evidence="5">
    <location>
        <begin position="84"/>
        <end position="91"/>
    </location>
</feature>
<feature type="helix" evidence="5">
    <location>
        <begin position="98"/>
        <end position="112"/>
    </location>
</feature>
<feature type="helix" evidence="5">
    <location>
        <begin position="117"/>
        <end position="122"/>
    </location>
</feature>
<feature type="helix" evidence="5">
    <location>
        <begin position="129"/>
        <end position="141"/>
    </location>
</feature>
<feature type="helix" evidence="5">
    <location>
        <begin position="144"/>
        <end position="161"/>
    </location>
</feature>
<sequence>MPVYQYKARDRQGRLVEATIEAEDLRTAARLLRDRGLFVAEIKEPGKGLQAEVRIPALERGPGLKDLAIFSRQLATMLGAGLTLLQALAILERQTENRKFREILKQVRTDVEGGMAFSEALSKHKIFSRLYVNLVRAGETSGGLDLILDRLASFLEKELELRGKIRSAMTYPVIVFVFAVGVAYFLLTGIVPQFAQILTDLGSELPLLTRFLIAVSDLLRAATLPLLLLAVALFFAYRWYYGTPQGRRVIDRLKLRLPVFGNLNRKTAVARFSRTLALLLSSGVNIVEALDITKGTAGNSVVEEIVEAAKLKIQQGDPLNLTLAQHPFVFPPMVSSMVAIGEETGALDTMLSKVADFYEREVDEAVASLTAAIEPLMIIFLGVIVGMIVAGMFLPLFKIIGTLSVQ</sequence>
<name>PILC_THET8</name>